<keyword id="KW-1185">Reference proteome</keyword>
<keyword id="KW-0687">Ribonucleoprotein</keyword>
<keyword id="KW-0689">Ribosomal protein</keyword>
<keyword id="KW-0694">RNA-binding</keyword>
<keyword id="KW-0699">rRNA-binding</keyword>
<sequence>MELAIKDASGGLEVSEATFGREFNEALVHQVVVAYAAGARQGTRAQKTRSEVSGGGKKPWAQKGTGRARAGTIRSPIWRSGGVSFAAKPQDHSQKVNRKMYRGAIKSILSELVRQERLIVVESFALAAPKTKELVAKLKELELKDVLIVTEEVDENLFLSARNLYKVDTRDVAGIDPVSLIAFDKVLITAAAVKQLEEALA</sequence>
<reference key="1">
    <citation type="journal article" date="2005" name="Genome Res.">
        <title>Coping with cold: the genome of the versatile marine Antarctica bacterium Pseudoalteromonas haloplanktis TAC125.</title>
        <authorList>
            <person name="Medigue C."/>
            <person name="Krin E."/>
            <person name="Pascal G."/>
            <person name="Barbe V."/>
            <person name="Bernsel A."/>
            <person name="Bertin P.N."/>
            <person name="Cheung F."/>
            <person name="Cruveiller S."/>
            <person name="D'Amico S."/>
            <person name="Duilio A."/>
            <person name="Fang G."/>
            <person name="Feller G."/>
            <person name="Ho C."/>
            <person name="Mangenot S."/>
            <person name="Marino G."/>
            <person name="Nilsson J."/>
            <person name="Parrilli E."/>
            <person name="Rocha E.P.C."/>
            <person name="Rouy Z."/>
            <person name="Sekowska A."/>
            <person name="Tutino M.L."/>
            <person name="Vallenet D."/>
            <person name="von Heijne G."/>
            <person name="Danchin A."/>
        </authorList>
    </citation>
    <scope>NUCLEOTIDE SEQUENCE [LARGE SCALE GENOMIC DNA]</scope>
    <source>
        <strain>TAC 125</strain>
    </source>
</reference>
<evidence type="ECO:0000255" key="1">
    <source>
        <dbReference type="HAMAP-Rule" id="MF_01328"/>
    </source>
</evidence>
<evidence type="ECO:0000256" key="2">
    <source>
        <dbReference type="SAM" id="MobiDB-lite"/>
    </source>
</evidence>
<evidence type="ECO:0000305" key="3"/>
<comment type="function">
    <text evidence="1">One of the primary rRNA binding proteins, this protein initially binds near the 5'-end of the 23S rRNA. It is important during the early stages of 50S assembly. It makes multiple contacts with different domains of the 23S rRNA in the assembled 50S subunit and ribosome.</text>
</comment>
<comment type="function">
    <text evidence="1">Forms part of the polypeptide exit tunnel.</text>
</comment>
<comment type="subunit">
    <text evidence="1">Part of the 50S ribosomal subunit.</text>
</comment>
<comment type="similarity">
    <text evidence="1">Belongs to the universal ribosomal protein uL4 family.</text>
</comment>
<organism>
    <name type="scientific">Pseudoalteromonas translucida (strain TAC 125)</name>
    <dbReference type="NCBI Taxonomy" id="326442"/>
    <lineage>
        <taxon>Bacteria</taxon>
        <taxon>Pseudomonadati</taxon>
        <taxon>Pseudomonadota</taxon>
        <taxon>Gammaproteobacteria</taxon>
        <taxon>Alteromonadales</taxon>
        <taxon>Pseudoalteromonadaceae</taxon>
        <taxon>Pseudoalteromonas</taxon>
    </lineage>
</organism>
<name>RL4_PSET1</name>
<accession>Q3IF24</accession>
<proteinExistence type="inferred from homology"/>
<dbReference type="EMBL" id="CR954246">
    <property type="protein sequence ID" value="CAI85249.1"/>
    <property type="molecule type" value="Genomic_DNA"/>
</dbReference>
<dbReference type="SMR" id="Q3IF24"/>
<dbReference type="STRING" id="326442.PSHAa0145"/>
<dbReference type="KEGG" id="pha:PSHAa0145"/>
<dbReference type="eggNOG" id="COG0088">
    <property type="taxonomic scope" value="Bacteria"/>
</dbReference>
<dbReference type="HOGENOM" id="CLU_041575_5_2_6"/>
<dbReference type="BioCyc" id="PHAL326442:PSHA_RS00740-MONOMER"/>
<dbReference type="Proteomes" id="UP000006843">
    <property type="component" value="Chromosome I"/>
</dbReference>
<dbReference type="GO" id="GO:1990904">
    <property type="term" value="C:ribonucleoprotein complex"/>
    <property type="evidence" value="ECO:0007669"/>
    <property type="project" value="UniProtKB-KW"/>
</dbReference>
<dbReference type="GO" id="GO:0005840">
    <property type="term" value="C:ribosome"/>
    <property type="evidence" value="ECO:0007669"/>
    <property type="project" value="UniProtKB-KW"/>
</dbReference>
<dbReference type="GO" id="GO:0019843">
    <property type="term" value="F:rRNA binding"/>
    <property type="evidence" value="ECO:0007669"/>
    <property type="project" value="UniProtKB-UniRule"/>
</dbReference>
<dbReference type="GO" id="GO:0003735">
    <property type="term" value="F:structural constituent of ribosome"/>
    <property type="evidence" value="ECO:0007669"/>
    <property type="project" value="InterPro"/>
</dbReference>
<dbReference type="GO" id="GO:0006412">
    <property type="term" value="P:translation"/>
    <property type="evidence" value="ECO:0007669"/>
    <property type="project" value="UniProtKB-UniRule"/>
</dbReference>
<dbReference type="FunFam" id="3.40.1370.10:FF:000001">
    <property type="entry name" value="50S ribosomal protein L4"/>
    <property type="match status" value="1"/>
</dbReference>
<dbReference type="Gene3D" id="3.40.1370.10">
    <property type="match status" value="1"/>
</dbReference>
<dbReference type="HAMAP" id="MF_01328_B">
    <property type="entry name" value="Ribosomal_uL4_B"/>
    <property type="match status" value="1"/>
</dbReference>
<dbReference type="InterPro" id="IPR002136">
    <property type="entry name" value="Ribosomal_uL4"/>
</dbReference>
<dbReference type="InterPro" id="IPR013005">
    <property type="entry name" value="Ribosomal_uL4-like"/>
</dbReference>
<dbReference type="InterPro" id="IPR023574">
    <property type="entry name" value="Ribosomal_uL4_dom_sf"/>
</dbReference>
<dbReference type="NCBIfam" id="TIGR03953">
    <property type="entry name" value="rplD_bact"/>
    <property type="match status" value="1"/>
</dbReference>
<dbReference type="PANTHER" id="PTHR10746">
    <property type="entry name" value="50S RIBOSOMAL PROTEIN L4"/>
    <property type="match status" value="1"/>
</dbReference>
<dbReference type="PANTHER" id="PTHR10746:SF6">
    <property type="entry name" value="LARGE RIBOSOMAL SUBUNIT PROTEIN UL4M"/>
    <property type="match status" value="1"/>
</dbReference>
<dbReference type="Pfam" id="PF00573">
    <property type="entry name" value="Ribosomal_L4"/>
    <property type="match status" value="1"/>
</dbReference>
<dbReference type="SUPFAM" id="SSF52166">
    <property type="entry name" value="Ribosomal protein L4"/>
    <property type="match status" value="1"/>
</dbReference>
<feature type="chain" id="PRO_0000242415" description="Large ribosomal subunit protein uL4">
    <location>
        <begin position="1"/>
        <end position="201"/>
    </location>
</feature>
<feature type="region of interest" description="Disordered" evidence="2">
    <location>
        <begin position="43"/>
        <end position="71"/>
    </location>
</feature>
<gene>
    <name evidence="1" type="primary">rplD</name>
    <name type="ordered locus">PSHAa0145</name>
</gene>
<protein>
    <recommendedName>
        <fullName evidence="1">Large ribosomal subunit protein uL4</fullName>
    </recommendedName>
    <alternativeName>
        <fullName evidence="3">50S ribosomal protein L4</fullName>
    </alternativeName>
</protein>